<keyword id="KW-0028">Amino-acid biosynthesis</keyword>
<keyword id="KW-0963">Cytoplasm</keyword>
<keyword id="KW-0315">Glutamine amidotransferase</keyword>
<keyword id="KW-0368">Histidine biosynthesis</keyword>
<keyword id="KW-0378">Hydrolase</keyword>
<keyword id="KW-0456">Lyase</keyword>
<keyword id="KW-1185">Reference proteome</keyword>
<proteinExistence type="inferred from homology"/>
<name>HIS5_LACP3</name>
<dbReference type="EC" id="4.3.2.10" evidence="1"/>
<dbReference type="EC" id="3.5.1.2" evidence="1"/>
<dbReference type="EMBL" id="CP000423">
    <property type="protein sequence ID" value="ABJ70209.1"/>
    <property type="molecule type" value="Genomic_DNA"/>
</dbReference>
<dbReference type="RefSeq" id="WP_003579150.1">
    <property type="nucleotide sequence ID" value="NC_008526.1"/>
</dbReference>
<dbReference type="RefSeq" id="YP_806651.1">
    <property type="nucleotide sequence ID" value="NC_008526.1"/>
</dbReference>
<dbReference type="SMR" id="Q039B3"/>
<dbReference type="STRING" id="321967.LSEI_1431"/>
<dbReference type="PaxDb" id="321967-LSEI_1431"/>
<dbReference type="KEGG" id="lca:LSEI_1431"/>
<dbReference type="PATRIC" id="fig|321967.11.peg.1411"/>
<dbReference type="HOGENOM" id="CLU_071837_2_2_9"/>
<dbReference type="UniPathway" id="UPA00031">
    <property type="reaction ID" value="UER00010"/>
</dbReference>
<dbReference type="Proteomes" id="UP000001651">
    <property type="component" value="Chromosome"/>
</dbReference>
<dbReference type="GO" id="GO:0005737">
    <property type="term" value="C:cytoplasm"/>
    <property type="evidence" value="ECO:0007669"/>
    <property type="project" value="UniProtKB-SubCell"/>
</dbReference>
<dbReference type="GO" id="GO:0004359">
    <property type="term" value="F:glutaminase activity"/>
    <property type="evidence" value="ECO:0007669"/>
    <property type="project" value="UniProtKB-EC"/>
</dbReference>
<dbReference type="GO" id="GO:0000107">
    <property type="term" value="F:imidazoleglycerol-phosphate synthase activity"/>
    <property type="evidence" value="ECO:0007669"/>
    <property type="project" value="UniProtKB-UniRule"/>
</dbReference>
<dbReference type="GO" id="GO:0016829">
    <property type="term" value="F:lyase activity"/>
    <property type="evidence" value="ECO:0007669"/>
    <property type="project" value="UniProtKB-KW"/>
</dbReference>
<dbReference type="GO" id="GO:0000105">
    <property type="term" value="P:L-histidine biosynthetic process"/>
    <property type="evidence" value="ECO:0007669"/>
    <property type="project" value="UniProtKB-UniRule"/>
</dbReference>
<dbReference type="CDD" id="cd01748">
    <property type="entry name" value="GATase1_IGP_Synthase"/>
    <property type="match status" value="1"/>
</dbReference>
<dbReference type="Gene3D" id="3.40.50.880">
    <property type="match status" value="1"/>
</dbReference>
<dbReference type="HAMAP" id="MF_00278">
    <property type="entry name" value="HisH"/>
    <property type="match status" value="1"/>
</dbReference>
<dbReference type="InterPro" id="IPR029062">
    <property type="entry name" value="Class_I_gatase-like"/>
</dbReference>
<dbReference type="InterPro" id="IPR017926">
    <property type="entry name" value="GATASE"/>
</dbReference>
<dbReference type="InterPro" id="IPR010139">
    <property type="entry name" value="Imidazole-glycPsynth_HisH"/>
</dbReference>
<dbReference type="NCBIfam" id="TIGR01855">
    <property type="entry name" value="IMP_synth_hisH"/>
    <property type="match status" value="1"/>
</dbReference>
<dbReference type="PANTHER" id="PTHR42701">
    <property type="entry name" value="IMIDAZOLE GLYCEROL PHOSPHATE SYNTHASE SUBUNIT HISH"/>
    <property type="match status" value="1"/>
</dbReference>
<dbReference type="PANTHER" id="PTHR42701:SF1">
    <property type="entry name" value="IMIDAZOLE GLYCEROL PHOSPHATE SYNTHASE SUBUNIT HISH"/>
    <property type="match status" value="1"/>
</dbReference>
<dbReference type="Pfam" id="PF00117">
    <property type="entry name" value="GATase"/>
    <property type="match status" value="1"/>
</dbReference>
<dbReference type="PIRSF" id="PIRSF000495">
    <property type="entry name" value="Amidotransf_hisH"/>
    <property type="match status" value="1"/>
</dbReference>
<dbReference type="SUPFAM" id="SSF52317">
    <property type="entry name" value="Class I glutamine amidotransferase-like"/>
    <property type="match status" value="1"/>
</dbReference>
<dbReference type="PROSITE" id="PS51273">
    <property type="entry name" value="GATASE_TYPE_1"/>
    <property type="match status" value="1"/>
</dbReference>
<evidence type="ECO:0000255" key="1">
    <source>
        <dbReference type="HAMAP-Rule" id="MF_00278"/>
    </source>
</evidence>
<feature type="chain" id="PRO_1000114782" description="Imidazole glycerol phosphate synthase subunit HisH">
    <location>
        <begin position="1"/>
        <end position="208"/>
    </location>
</feature>
<feature type="domain" description="Glutamine amidotransferase type-1" evidence="1">
    <location>
        <begin position="1"/>
        <end position="206"/>
    </location>
</feature>
<feature type="active site" description="Nucleophile" evidence="1">
    <location>
        <position position="79"/>
    </location>
</feature>
<feature type="active site" evidence="1">
    <location>
        <position position="181"/>
    </location>
</feature>
<feature type="active site" evidence="1">
    <location>
        <position position="183"/>
    </location>
</feature>
<protein>
    <recommendedName>
        <fullName evidence="1">Imidazole glycerol phosphate synthase subunit HisH</fullName>
        <ecNumber evidence="1">4.3.2.10</ecNumber>
    </recommendedName>
    <alternativeName>
        <fullName evidence="1">IGP synthase glutaminase subunit</fullName>
        <ecNumber evidence="1">3.5.1.2</ecNumber>
    </alternativeName>
    <alternativeName>
        <fullName evidence="1">IGP synthase subunit HisH</fullName>
    </alternativeName>
    <alternativeName>
        <fullName evidence="1">ImGP synthase subunit HisH</fullName>
        <shortName evidence="1">IGPS subunit HisH</shortName>
    </alternativeName>
</protein>
<gene>
    <name evidence="1" type="primary">hisH</name>
    <name type="ordered locus">LSEI_1431</name>
</gene>
<sequence>MIVIVDYDTGNTRNVKKALDYLGVNNQLSADPAIIMAASGLILPGVGAFKEAMKALNQRQLVPVIQAFAATGKPLLGICLGMQLLFDRSFEFGETAGLGLIPGEVVAIPTDSGLAVPHMGWNTNSLTQPDLFAAVFADQATYFVHSFYATTLPQFTLATTDYGQPLTSIVRRNNVLGTQFHPEKSGAIGLAGLKKFKEMTEDEALSRD</sequence>
<reference key="1">
    <citation type="journal article" date="2006" name="Proc. Natl. Acad. Sci. U.S.A.">
        <title>Comparative genomics of the lactic acid bacteria.</title>
        <authorList>
            <person name="Makarova K.S."/>
            <person name="Slesarev A."/>
            <person name="Wolf Y.I."/>
            <person name="Sorokin A."/>
            <person name="Mirkin B."/>
            <person name="Koonin E.V."/>
            <person name="Pavlov A."/>
            <person name="Pavlova N."/>
            <person name="Karamychev V."/>
            <person name="Polouchine N."/>
            <person name="Shakhova V."/>
            <person name="Grigoriev I."/>
            <person name="Lou Y."/>
            <person name="Rohksar D."/>
            <person name="Lucas S."/>
            <person name="Huang K."/>
            <person name="Goodstein D.M."/>
            <person name="Hawkins T."/>
            <person name="Plengvidhya V."/>
            <person name="Welker D."/>
            <person name="Hughes J."/>
            <person name="Goh Y."/>
            <person name="Benson A."/>
            <person name="Baldwin K."/>
            <person name="Lee J.-H."/>
            <person name="Diaz-Muniz I."/>
            <person name="Dosti B."/>
            <person name="Smeianov V."/>
            <person name="Wechter W."/>
            <person name="Barabote R."/>
            <person name="Lorca G."/>
            <person name="Altermann E."/>
            <person name="Barrangou R."/>
            <person name="Ganesan B."/>
            <person name="Xie Y."/>
            <person name="Rawsthorne H."/>
            <person name="Tamir D."/>
            <person name="Parker C."/>
            <person name="Breidt F."/>
            <person name="Broadbent J.R."/>
            <person name="Hutkins R."/>
            <person name="O'Sullivan D."/>
            <person name="Steele J."/>
            <person name="Unlu G."/>
            <person name="Saier M.H. Jr."/>
            <person name="Klaenhammer T."/>
            <person name="Richardson P."/>
            <person name="Kozyavkin S."/>
            <person name="Weimer B.C."/>
            <person name="Mills D.A."/>
        </authorList>
    </citation>
    <scope>NUCLEOTIDE SEQUENCE [LARGE SCALE GENOMIC DNA]</scope>
    <source>
        <strain>ATCC 334 / BCRC 17002 / CCUG 31169 / CIP 107868 / KCTC 3260 / NRRL B-441</strain>
    </source>
</reference>
<comment type="function">
    <text evidence="1">IGPS catalyzes the conversion of PRFAR and glutamine to IGP, AICAR and glutamate. The HisH subunit catalyzes the hydrolysis of glutamine to glutamate and ammonia as part of the synthesis of IGP and AICAR. The resulting ammonia molecule is channeled to the active site of HisF.</text>
</comment>
<comment type="catalytic activity">
    <reaction evidence="1">
        <text>5-[(5-phospho-1-deoxy-D-ribulos-1-ylimino)methylamino]-1-(5-phospho-beta-D-ribosyl)imidazole-4-carboxamide + L-glutamine = D-erythro-1-(imidazol-4-yl)glycerol 3-phosphate + 5-amino-1-(5-phospho-beta-D-ribosyl)imidazole-4-carboxamide + L-glutamate + H(+)</text>
        <dbReference type="Rhea" id="RHEA:24793"/>
        <dbReference type="ChEBI" id="CHEBI:15378"/>
        <dbReference type="ChEBI" id="CHEBI:29985"/>
        <dbReference type="ChEBI" id="CHEBI:58278"/>
        <dbReference type="ChEBI" id="CHEBI:58359"/>
        <dbReference type="ChEBI" id="CHEBI:58475"/>
        <dbReference type="ChEBI" id="CHEBI:58525"/>
        <dbReference type="EC" id="4.3.2.10"/>
    </reaction>
</comment>
<comment type="catalytic activity">
    <reaction evidence="1">
        <text>L-glutamine + H2O = L-glutamate + NH4(+)</text>
        <dbReference type="Rhea" id="RHEA:15889"/>
        <dbReference type="ChEBI" id="CHEBI:15377"/>
        <dbReference type="ChEBI" id="CHEBI:28938"/>
        <dbReference type="ChEBI" id="CHEBI:29985"/>
        <dbReference type="ChEBI" id="CHEBI:58359"/>
        <dbReference type="EC" id="3.5.1.2"/>
    </reaction>
</comment>
<comment type="pathway">
    <text evidence="1">Amino-acid biosynthesis; L-histidine biosynthesis; L-histidine from 5-phospho-alpha-D-ribose 1-diphosphate: step 5/9.</text>
</comment>
<comment type="subunit">
    <text evidence="1">Heterodimer of HisH and HisF.</text>
</comment>
<comment type="subcellular location">
    <subcellularLocation>
        <location evidence="1">Cytoplasm</location>
    </subcellularLocation>
</comment>
<organism>
    <name type="scientific">Lacticaseibacillus paracasei (strain ATCC 334 / BCRC 17002 / CCUG 31169 / CIP 107868 / KCTC 3260 / NRRL B-441)</name>
    <name type="common">Lactobacillus paracasei</name>
    <dbReference type="NCBI Taxonomy" id="321967"/>
    <lineage>
        <taxon>Bacteria</taxon>
        <taxon>Bacillati</taxon>
        <taxon>Bacillota</taxon>
        <taxon>Bacilli</taxon>
        <taxon>Lactobacillales</taxon>
        <taxon>Lactobacillaceae</taxon>
        <taxon>Lacticaseibacillus</taxon>
    </lineage>
</organism>
<accession>Q039B3</accession>